<reference key="1">
    <citation type="journal article" date="2007" name="Mol. Biol. Evol.">
        <title>The complete chloroplast genome of the chlorarachniophyte Bigelowiella natans: evidence for independent origins of chlorarachniophyte and euglenid secondary endosymbionts.</title>
        <authorList>
            <person name="Rogers M.B."/>
            <person name="Gilson P.R."/>
            <person name="Su V."/>
            <person name="McFadden G.I."/>
            <person name="Keeling P.J."/>
        </authorList>
    </citation>
    <scope>NUCLEOTIDE SEQUENCE [LARGE SCALE GENOMIC DNA]</scope>
</reference>
<feature type="chain" id="PRO_0000292131" description="Photosystem I iron-sulfur center">
    <location>
        <begin position="1"/>
        <end position="93"/>
    </location>
</feature>
<feature type="domain" description="4Fe-4S ferredoxin-type 1" evidence="1">
    <location>
        <begin position="13"/>
        <end position="43"/>
    </location>
</feature>
<feature type="domain" description="4Fe-4S ferredoxin-type 2" evidence="1">
    <location>
        <begin position="50"/>
        <end position="80"/>
    </location>
</feature>
<feature type="binding site" evidence="1">
    <location>
        <position position="23"/>
    </location>
    <ligand>
        <name>[4Fe-4S] cluster</name>
        <dbReference type="ChEBI" id="CHEBI:49883"/>
        <label>1</label>
    </ligand>
</feature>
<feature type="binding site" evidence="1">
    <location>
        <position position="26"/>
    </location>
    <ligand>
        <name>[4Fe-4S] cluster</name>
        <dbReference type="ChEBI" id="CHEBI:49883"/>
        <label>1</label>
    </ligand>
</feature>
<feature type="binding site" evidence="1">
    <location>
        <position position="29"/>
    </location>
    <ligand>
        <name>[4Fe-4S] cluster</name>
        <dbReference type="ChEBI" id="CHEBI:49883"/>
        <label>1</label>
    </ligand>
</feature>
<feature type="binding site" evidence="1">
    <location>
        <position position="33"/>
    </location>
    <ligand>
        <name>[4Fe-4S] cluster</name>
        <dbReference type="ChEBI" id="CHEBI:49883"/>
        <label>2</label>
    </ligand>
</feature>
<feature type="binding site" evidence="1">
    <location>
        <position position="60"/>
    </location>
    <ligand>
        <name>[4Fe-4S] cluster</name>
        <dbReference type="ChEBI" id="CHEBI:49883"/>
        <label>2</label>
    </ligand>
</feature>
<feature type="binding site" evidence="1">
    <location>
        <position position="63"/>
    </location>
    <ligand>
        <name>[4Fe-4S] cluster</name>
        <dbReference type="ChEBI" id="CHEBI:49883"/>
        <label>2</label>
    </ligand>
</feature>
<feature type="binding site" evidence="1">
    <location>
        <position position="66"/>
    </location>
    <ligand>
        <name>[4Fe-4S] cluster</name>
        <dbReference type="ChEBI" id="CHEBI:49883"/>
        <label>2</label>
    </ligand>
</feature>
<feature type="binding site" evidence="1">
    <location>
        <position position="70"/>
    </location>
    <ligand>
        <name>[4Fe-4S] cluster</name>
        <dbReference type="ChEBI" id="CHEBI:49883"/>
        <label>1</label>
    </ligand>
</feature>
<evidence type="ECO:0000255" key="1">
    <source>
        <dbReference type="HAMAP-Rule" id="MF_01303"/>
    </source>
</evidence>
<accession>Q06J47</accession>
<geneLocation type="chloroplast"/>
<name>PSAC_BIGNA</name>
<proteinExistence type="inferred from homology"/>
<sequence length="93" mass="10380">MKFELLNQVNLKKDHEIRIYSTCIGCTQCVRACPTDVLEMVPSTTCKAKQVVTVPRIEDCVGCKRCESACPTDFLSIRVYLGGETLRSMGLAY</sequence>
<keyword id="KW-0004">4Fe-4S</keyword>
<keyword id="KW-0150">Chloroplast</keyword>
<keyword id="KW-0249">Electron transport</keyword>
<keyword id="KW-0408">Iron</keyword>
<keyword id="KW-0411">Iron-sulfur</keyword>
<keyword id="KW-0472">Membrane</keyword>
<keyword id="KW-0479">Metal-binding</keyword>
<keyword id="KW-0560">Oxidoreductase</keyword>
<keyword id="KW-0602">Photosynthesis</keyword>
<keyword id="KW-0603">Photosystem I</keyword>
<keyword id="KW-0934">Plastid</keyword>
<keyword id="KW-0677">Repeat</keyword>
<keyword id="KW-0793">Thylakoid</keyword>
<keyword id="KW-0813">Transport</keyword>
<dbReference type="EC" id="1.97.1.12" evidence="1"/>
<dbReference type="EMBL" id="DQ851108">
    <property type="protein sequence ID" value="ABG91412.1"/>
    <property type="molecule type" value="Genomic_DNA"/>
</dbReference>
<dbReference type="RefSeq" id="YP_778580.1">
    <property type="nucleotide sequence ID" value="NC_008408.1"/>
</dbReference>
<dbReference type="SMR" id="Q06J47"/>
<dbReference type="GeneID" id="4352997"/>
<dbReference type="GO" id="GO:0009535">
    <property type="term" value="C:chloroplast thylakoid membrane"/>
    <property type="evidence" value="ECO:0007669"/>
    <property type="project" value="UniProtKB-SubCell"/>
</dbReference>
<dbReference type="GO" id="GO:0009522">
    <property type="term" value="C:photosystem I"/>
    <property type="evidence" value="ECO:0007669"/>
    <property type="project" value="UniProtKB-KW"/>
</dbReference>
<dbReference type="GO" id="GO:0051539">
    <property type="term" value="F:4 iron, 4 sulfur cluster binding"/>
    <property type="evidence" value="ECO:0007669"/>
    <property type="project" value="UniProtKB-KW"/>
</dbReference>
<dbReference type="GO" id="GO:0009055">
    <property type="term" value="F:electron transfer activity"/>
    <property type="evidence" value="ECO:0007669"/>
    <property type="project" value="UniProtKB-UniRule"/>
</dbReference>
<dbReference type="GO" id="GO:0046872">
    <property type="term" value="F:metal ion binding"/>
    <property type="evidence" value="ECO:0007669"/>
    <property type="project" value="UniProtKB-KW"/>
</dbReference>
<dbReference type="GO" id="GO:0016491">
    <property type="term" value="F:oxidoreductase activity"/>
    <property type="evidence" value="ECO:0007669"/>
    <property type="project" value="UniProtKB-KW"/>
</dbReference>
<dbReference type="GO" id="GO:0009773">
    <property type="term" value="P:photosynthetic electron transport in photosystem I"/>
    <property type="evidence" value="ECO:0007669"/>
    <property type="project" value="InterPro"/>
</dbReference>
<dbReference type="Gene3D" id="3.30.70.20">
    <property type="match status" value="1"/>
</dbReference>
<dbReference type="HAMAP" id="MF_01303">
    <property type="entry name" value="PSI_PsaC"/>
    <property type="match status" value="1"/>
</dbReference>
<dbReference type="InterPro" id="IPR017896">
    <property type="entry name" value="4Fe4S_Fe-S-bd"/>
</dbReference>
<dbReference type="InterPro" id="IPR017900">
    <property type="entry name" value="4Fe4S_Fe_S_CS"/>
</dbReference>
<dbReference type="InterPro" id="IPR050157">
    <property type="entry name" value="PSI_iron-sulfur_center"/>
</dbReference>
<dbReference type="InterPro" id="IPR017491">
    <property type="entry name" value="PSI_PsaC"/>
</dbReference>
<dbReference type="NCBIfam" id="TIGR03048">
    <property type="entry name" value="PS_I_psaC"/>
    <property type="match status" value="1"/>
</dbReference>
<dbReference type="PANTHER" id="PTHR24960:SF79">
    <property type="entry name" value="PHOTOSYSTEM I IRON-SULFUR CENTER"/>
    <property type="match status" value="1"/>
</dbReference>
<dbReference type="PANTHER" id="PTHR24960">
    <property type="entry name" value="PHOTOSYSTEM I IRON-SULFUR CENTER-RELATED"/>
    <property type="match status" value="1"/>
</dbReference>
<dbReference type="Pfam" id="PF12838">
    <property type="entry name" value="Fer4_7"/>
    <property type="match status" value="1"/>
</dbReference>
<dbReference type="SUPFAM" id="SSF54862">
    <property type="entry name" value="4Fe-4S ferredoxins"/>
    <property type="match status" value="1"/>
</dbReference>
<dbReference type="PROSITE" id="PS00198">
    <property type="entry name" value="4FE4S_FER_1"/>
    <property type="match status" value="2"/>
</dbReference>
<dbReference type="PROSITE" id="PS51379">
    <property type="entry name" value="4FE4S_FER_2"/>
    <property type="match status" value="2"/>
</dbReference>
<organism>
    <name type="scientific">Bigelowiella natans</name>
    <name type="common">Pedinomonas minutissima</name>
    <name type="synonym">Chlorarachnion sp. (strain CCMP621)</name>
    <dbReference type="NCBI Taxonomy" id="227086"/>
    <lineage>
        <taxon>Eukaryota</taxon>
        <taxon>Sar</taxon>
        <taxon>Rhizaria</taxon>
        <taxon>Cercozoa</taxon>
        <taxon>Chlorarachniophyceae</taxon>
        <taxon>Bigelowiella</taxon>
    </lineage>
</organism>
<comment type="function">
    <text>Apoprotein for the two 4Fe-4S centers FA and FB of photosystem I (PSI); essential for photochemical activity. FB is the terminal electron acceptor of PSI, donating electrons to ferredoxin. The C-terminus interacts with PsaA/B/D and helps assemble the protein into the PSI complex. Required for binding of PsaD and PsaE to PSI. PSI is a plastocyanin-ferredoxin oxidoreductase, converting photonic excitation into a charge separation, which transfers an electron from the donor P700 chlorophyll pair to the spectroscopically characterized acceptors A0, A1, FX, FA and FB in turn.</text>
</comment>
<comment type="catalytic activity">
    <reaction evidence="1">
        <text>reduced [plastocyanin] + hnu + oxidized [2Fe-2S]-[ferredoxin] = oxidized [plastocyanin] + reduced [2Fe-2S]-[ferredoxin]</text>
        <dbReference type="Rhea" id="RHEA:30407"/>
        <dbReference type="Rhea" id="RHEA-COMP:10000"/>
        <dbReference type="Rhea" id="RHEA-COMP:10001"/>
        <dbReference type="Rhea" id="RHEA-COMP:10039"/>
        <dbReference type="Rhea" id="RHEA-COMP:10040"/>
        <dbReference type="ChEBI" id="CHEBI:29036"/>
        <dbReference type="ChEBI" id="CHEBI:30212"/>
        <dbReference type="ChEBI" id="CHEBI:33737"/>
        <dbReference type="ChEBI" id="CHEBI:33738"/>
        <dbReference type="ChEBI" id="CHEBI:49552"/>
        <dbReference type="EC" id="1.97.1.12"/>
    </reaction>
</comment>
<comment type="cofactor">
    <cofactor evidence="1">
        <name>[4Fe-4S] cluster</name>
        <dbReference type="ChEBI" id="CHEBI:49883"/>
    </cofactor>
    <text evidence="1">Binds 2 [4Fe-4S] clusters. Cluster 2 is most probably the spectroscopically characterized electron acceptor FA and cluster 1 is most probably FB.</text>
</comment>
<comment type="subunit">
    <text evidence="1">The eukaryotic PSI reaction center is composed of at least 11 subunits.</text>
</comment>
<comment type="subcellular location">
    <subcellularLocation>
        <location evidence="1">Plastid</location>
        <location evidence="1">Chloroplast thylakoid membrane</location>
        <topology evidence="1">Peripheral membrane protein</topology>
        <orientation evidence="1">Stromal side</orientation>
    </subcellularLocation>
</comment>
<gene>
    <name evidence="1" type="primary">psaC</name>
</gene>
<protein>
    <recommendedName>
        <fullName evidence="1">Photosystem I iron-sulfur center</fullName>
        <ecNumber evidence="1">1.97.1.12</ecNumber>
    </recommendedName>
    <alternativeName>
        <fullName evidence="1">9 kDa polypeptide</fullName>
    </alternativeName>
    <alternativeName>
        <fullName evidence="1">PSI-C</fullName>
    </alternativeName>
    <alternativeName>
        <fullName evidence="1">Photosystem I subunit VII</fullName>
    </alternativeName>
    <alternativeName>
        <fullName evidence="1">PsaC</fullName>
    </alternativeName>
</protein>